<evidence type="ECO:0000250" key="1">
    <source>
        <dbReference type="UniProtKB" id="P9WQB1"/>
    </source>
</evidence>
<evidence type="ECO:0000269" key="2">
    <source>
    </source>
</evidence>
<evidence type="ECO:0000269" key="3">
    <source>
    </source>
</evidence>
<evidence type="ECO:0000269" key="4">
    <source>
    </source>
</evidence>
<evidence type="ECO:0000303" key="5">
    <source>
    </source>
</evidence>
<evidence type="ECO:0000303" key="6">
    <source>
    </source>
</evidence>
<evidence type="ECO:0000305" key="7"/>
<protein>
    <recommendedName>
        <fullName evidence="5 6">Alanine dehydrogenase</fullName>
        <ecNumber evidence="2 4">1.4.1.1</ecNumber>
    </recommendedName>
</protein>
<organism>
    <name type="scientific">Mycolicibacterium smegmatis (strain ATCC 700084 / mc(2)155)</name>
    <name type="common">Mycobacterium smegmatis</name>
    <dbReference type="NCBI Taxonomy" id="246196"/>
    <lineage>
        <taxon>Bacteria</taxon>
        <taxon>Bacillati</taxon>
        <taxon>Actinomycetota</taxon>
        <taxon>Actinomycetes</taxon>
        <taxon>Mycobacteriales</taxon>
        <taxon>Mycobacteriaceae</taxon>
        <taxon>Mycolicibacterium</taxon>
    </lineage>
</organism>
<keyword id="KW-0963">Cytoplasm</keyword>
<keyword id="KW-0903">Direct protein sequencing</keyword>
<keyword id="KW-0520">NAD</keyword>
<keyword id="KW-0547">Nucleotide-binding</keyword>
<keyword id="KW-0560">Oxidoreductase</keyword>
<keyword id="KW-1185">Reference proteome</keyword>
<accession>A0QVQ8</accession>
<accession>Q8KY18</accession>
<proteinExistence type="evidence at protein level"/>
<reference key="1">
    <citation type="journal article" date="2002" name="J. Bacteriol.">
        <title>Mycobacterium smegmatis L-alanine dehydrogenase (Ald) is required for proficient utilization of alanine as a sole nitrogen source and sustained anaerobic growth.</title>
        <authorList>
            <person name="Feng Z."/>
            <person name="Caceres N.E."/>
            <person name="Sarath G."/>
            <person name="Barletta R.G."/>
        </authorList>
    </citation>
    <scope>NUCLEOTIDE SEQUENCE [GENOMIC DNA]</scope>
    <scope>PROTEIN SEQUENCE OF 1-10</scope>
    <scope>FUNCTION</scope>
    <scope>CATALYTIC ACTIVITY</scope>
    <scope>INDUCTION</scope>
    <scope>DISRUPTION PHENOTYPE</scope>
    <source>
        <strain>ATCC 700084 / mc(2)155</strain>
    </source>
</reference>
<reference key="2">
    <citation type="submission" date="2006-10" db="EMBL/GenBank/DDBJ databases">
        <authorList>
            <person name="Fleischmann R.D."/>
            <person name="Dodson R.J."/>
            <person name="Haft D.H."/>
            <person name="Merkel J.S."/>
            <person name="Nelson W.C."/>
            <person name="Fraser C.M."/>
        </authorList>
    </citation>
    <scope>NUCLEOTIDE SEQUENCE [LARGE SCALE GENOMIC DNA]</scope>
    <source>
        <strain>ATCC 700084 / mc(2)155</strain>
    </source>
</reference>
<reference key="3">
    <citation type="journal article" date="2007" name="Genome Biol.">
        <title>Interrupted coding sequences in Mycobacterium smegmatis: authentic mutations or sequencing errors?</title>
        <authorList>
            <person name="Deshayes C."/>
            <person name="Perrodou E."/>
            <person name="Gallien S."/>
            <person name="Euphrasie D."/>
            <person name="Schaeffer C."/>
            <person name="Van-Dorsselaer A."/>
            <person name="Poch O."/>
            <person name="Lecompte O."/>
            <person name="Reyrat J.-M."/>
        </authorList>
    </citation>
    <scope>NUCLEOTIDE SEQUENCE [LARGE SCALE GENOMIC DNA]</scope>
    <source>
        <strain>ATCC 700084 / mc(2)155</strain>
    </source>
</reference>
<reference key="4">
    <citation type="journal article" date="2009" name="Genome Res.">
        <title>Ortho-proteogenomics: multiple proteomes investigation through orthology and a new MS-based protocol.</title>
        <authorList>
            <person name="Gallien S."/>
            <person name="Perrodou E."/>
            <person name="Carapito C."/>
            <person name="Deshayes C."/>
            <person name="Reyrat J.-M."/>
            <person name="Van Dorsselaer A."/>
            <person name="Poch O."/>
            <person name="Schaeffer C."/>
            <person name="Lecompte O."/>
        </authorList>
    </citation>
    <scope>NUCLEOTIDE SEQUENCE [LARGE SCALE GENOMIC DNA]</scope>
    <source>
        <strain>ATCC 700084 / mc(2)155</strain>
    </source>
</reference>
<reference key="5">
    <citation type="journal article" date="1998" name="FEMS Microbiol. Lett.">
        <title>Increased alanine dehydrogenase activity during dormancy in Mycobacterium smegmatis.</title>
        <authorList>
            <person name="Hutter B."/>
            <person name="Dick T."/>
        </authorList>
    </citation>
    <scope>FUNCTION</scope>
    <scope>CATALYTIC ACTIVITY</scope>
    <scope>INDUCTION</scope>
    <scope>BIOPHYSICOCHEMICAL PROPERTIES</scope>
</reference>
<reference key="6">
    <citation type="journal article" date="1998" name="Microbiology">
        <title>Extracellular enzyme activities potentially involved in the pathogenicity of Mycobacterium tuberculosis.</title>
        <authorList>
            <person name="Raynaud C."/>
            <person name="Etienne G."/>
            <person name="Peyron P."/>
            <person name="Laneelle M.A."/>
            <person name="Daffe M."/>
        </authorList>
    </citation>
    <scope>SUBCELLULAR LOCATION</scope>
</reference>
<feature type="chain" id="PRO_0000419669" description="Alanine dehydrogenase">
    <location>
        <begin position="1"/>
        <end position="371"/>
    </location>
</feature>
<feature type="active site" description="Proton donor/acceptor" evidence="1">
    <location>
        <position position="96"/>
    </location>
</feature>
<feature type="active site" description="Proton donor/acceptor" evidence="1">
    <location>
        <position position="270"/>
    </location>
</feature>
<feature type="binding site" evidence="1">
    <location>
        <position position="15"/>
    </location>
    <ligand>
        <name>substrate</name>
    </ligand>
</feature>
<feature type="binding site" evidence="1">
    <location>
        <position position="75"/>
    </location>
    <ligand>
        <name>substrate</name>
    </ligand>
</feature>
<feature type="binding site" evidence="1">
    <location>
        <position position="134"/>
    </location>
    <ligand>
        <name>NAD(+)</name>
        <dbReference type="ChEBI" id="CHEBI:57540"/>
    </ligand>
</feature>
<feature type="binding site" evidence="1">
    <location>
        <begin position="178"/>
        <end position="179"/>
    </location>
    <ligand>
        <name>NAD(+)</name>
        <dbReference type="ChEBI" id="CHEBI:57540"/>
    </ligand>
</feature>
<feature type="binding site" evidence="1">
    <location>
        <position position="198"/>
    </location>
    <ligand>
        <name>NAD(+)</name>
        <dbReference type="ChEBI" id="CHEBI:57540"/>
    </ligand>
</feature>
<feature type="binding site" evidence="1">
    <location>
        <position position="220"/>
    </location>
    <ligand>
        <name>NAD(+)</name>
        <dbReference type="ChEBI" id="CHEBI:57540"/>
    </ligand>
</feature>
<feature type="binding site" evidence="1">
    <location>
        <begin position="239"/>
        <end position="240"/>
    </location>
    <ligand>
        <name>NAD(+)</name>
        <dbReference type="ChEBI" id="CHEBI:57540"/>
    </ligand>
</feature>
<feature type="binding site" evidence="1">
    <location>
        <begin position="267"/>
        <end position="270"/>
    </location>
    <ligand>
        <name>NAD(+)</name>
        <dbReference type="ChEBI" id="CHEBI:57540"/>
    </ligand>
</feature>
<feature type="binding site" evidence="1">
    <location>
        <position position="279"/>
    </location>
    <ligand>
        <name>NAD(+)</name>
        <dbReference type="ChEBI" id="CHEBI:57540"/>
    </ligand>
</feature>
<feature type="binding site" evidence="1">
    <location>
        <begin position="298"/>
        <end position="301"/>
    </location>
    <ligand>
        <name>NAD(+)</name>
        <dbReference type="ChEBI" id="CHEBI:57540"/>
    </ligand>
</feature>
<sequence>MLVGIPTEIKNNEYRVAITPAGVAELTRRGHEVIIQAGAGEGSAISDRDFKAAGAEIVNTADQVWSEAELLLKVKEPIEPEYSRMRKGQTLFTYLHLAASKPCTDALLASGTTSIAYETVQTAEGALPLLAPMSEVAGRLSAQVGAYHLMRSYGGRGVLMGGVPGVAPAEVVVIGAGTAGYNAARVAAGMGAHVTVFDLNINTLRRVDGEFGGRIETRYSSSLELEEAVKKADLVIGAVLVPGAKAPKLVTNSTVAHMKPGAVLVDIAIDQGGCFEDSRPTTHDEPTFKVHDTIFYCVANMPGAVPRTSTFALTNSTMPYVLKLADKGWQAACASDSALAKGLSTHDGKLLSEAVAKDLDLPFTDAAQFLA</sequence>
<comment type="function">
    <text evidence="2 4">Catalyzes the reversible reductive amination of pyruvate to L-alanine. Required for proficient utilization of D- or L-alanine as a nitrogen source. May be required for the adaptation from aerobic growth to anaerobic dormancy. It could be involved in the maintenance of the NAD pool during the shift to an anaerobic dormant state in which oxygen as a terminal electron acceptor becomes limiting.</text>
</comment>
<comment type="catalytic activity">
    <reaction evidence="2 4">
        <text>L-alanine + NAD(+) + H2O = pyruvate + NH4(+) + NADH + H(+)</text>
        <dbReference type="Rhea" id="RHEA:18405"/>
        <dbReference type="ChEBI" id="CHEBI:15361"/>
        <dbReference type="ChEBI" id="CHEBI:15377"/>
        <dbReference type="ChEBI" id="CHEBI:15378"/>
        <dbReference type="ChEBI" id="CHEBI:28938"/>
        <dbReference type="ChEBI" id="CHEBI:57540"/>
        <dbReference type="ChEBI" id="CHEBI:57945"/>
        <dbReference type="ChEBI" id="CHEBI:57972"/>
        <dbReference type="EC" id="1.4.1.1"/>
    </reaction>
</comment>
<comment type="biophysicochemical properties">
    <phDependence>
        <text evidence="4">Optimum pH is between 10 and 11 for the oxidative deamination and between 7 and 7.5 for the reductive amination.</text>
    </phDependence>
</comment>
<comment type="pathway">
    <text>Amino-acid degradation; L-alanine degradation via dehydrogenase pathway; NH(3) and pyruvate from L-alanine: step 1/1.</text>
</comment>
<comment type="subunit">
    <text evidence="1">Homohexamer. Trimer of dimers.</text>
</comment>
<comment type="subcellular location">
    <subcellularLocation>
        <location evidence="3">Cytoplasm</location>
    </subcellularLocation>
</comment>
<comment type="induction">
    <text evidence="2 4">Induced by both D- and L-alanine under aerobic and anaerobic growth conditions, in exponential and stationary phase. In the absence of inducer, high basal levels of activity are observed in cells growing exponentially under anaerobic conditions (at protein level) (PubMed:12193615). Strongly induced immediately after deflection from aerobic growth.</text>
</comment>
<comment type="disruption phenotype">
    <text evidence="2">Non-essential, it can be deleted. Disruption suppresses alanine dehydrogenase activity, impairs the utilization of alanine as a sole nitrogen source while cells grows to a 10-fold decreased saturation density under anaerobic conditions.</text>
</comment>
<comment type="similarity">
    <text evidence="7">Belongs to the AlaDH/PNT family.</text>
</comment>
<name>DHA_MYCS2</name>
<gene>
    <name evidence="5" type="primary">ald</name>
    <name type="ordered locus">MSMEG_2659</name>
    <name type="ordered locus">MSMEI_2596</name>
</gene>
<dbReference type="EC" id="1.4.1.1" evidence="2 4"/>
<dbReference type="EMBL" id="AF304867">
    <property type="protein sequence ID" value="AAM44187.1"/>
    <property type="molecule type" value="Genomic_DNA"/>
</dbReference>
<dbReference type="EMBL" id="CP000480">
    <property type="protein sequence ID" value="ABK70995.1"/>
    <property type="molecule type" value="Genomic_DNA"/>
</dbReference>
<dbReference type="EMBL" id="CP001663">
    <property type="protein sequence ID" value="AFP39064.1"/>
    <property type="molecule type" value="Genomic_DNA"/>
</dbReference>
<dbReference type="RefSeq" id="WP_003894041.1">
    <property type="nucleotide sequence ID" value="NZ_SIJM01000064.1"/>
</dbReference>
<dbReference type="RefSeq" id="YP_886996.1">
    <property type="nucleotide sequence ID" value="NC_008596.1"/>
</dbReference>
<dbReference type="SMR" id="A0QVQ8"/>
<dbReference type="STRING" id="246196.MSMEG_2659"/>
<dbReference type="PaxDb" id="246196-MSMEI_2596"/>
<dbReference type="GeneID" id="93457445"/>
<dbReference type="KEGG" id="msb:LJ00_13235"/>
<dbReference type="KEGG" id="msg:MSMEI_2596"/>
<dbReference type="KEGG" id="msm:MSMEG_2659"/>
<dbReference type="PATRIC" id="fig|246196.56.peg.2659"/>
<dbReference type="eggNOG" id="COG0686">
    <property type="taxonomic scope" value="Bacteria"/>
</dbReference>
<dbReference type="OrthoDB" id="9804592at2"/>
<dbReference type="UniPathway" id="UPA00527">
    <property type="reaction ID" value="UER00585"/>
</dbReference>
<dbReference type="Proteomes" id="UP000000757">
    <property type="component" value="Chromosome"/>
</dbReference>
<dbReference type="Proteomes" id="UP000006158">
    <property type="component" value="Chromosome"/>
</dbReference>
<dbReference type="GO" id="GO:0005829">
    <property type="term" value="C:cytosol"/>
    <property type="evidence" value="ECO:0000314"/>
    <property type="project" value="UniProtKB"/>
</dbReference>
<dbReference type="GO" id="GO:0005886">
    <property type="term" value="C:plasma membrane"/>
    <property type="evidence" value="ECO:0007669"/>
    <property type="project" value="TreeGrafter"/>
</dbReference>
<dbReference type="GO" id="GO:0000286">
    <property type="term" value="F:alanine dehydrogenase activity"/>
    <property type="evidence" value="ECO:0000314"/>
    <property type="project" value="UniProtKB"/>
</dbReference>
<dbReference type="GO" id="GO:0000166">
    <property type="term" value="F:nucleotide binding"/>
    <property type="evidence" value="ECO:0007669"/>
    <property type="project" value="UniProtKB-KW"/>
</dbReference>
<dbReference type="GO" id="GO:0006524">
    <property type="term" value="P:alanine catabolic process"/>
    <property type="evidence" value="ECO:0000250"/>
    <property type="project" value="UniProtKB"/>
</dbReference>
<dbReference type="GO" id="GO:0042853">
    <property type="term" value="P:L-alanine catabolic process"/>
    <property type="evidence" value="ECO:0007669"/>
    <property type="project" value="UniProtKB-UniPathway"/>
</dbReference>
<dbReference type="CDD" id="cd05305">
    <property type="entry name" value="L-AlaDH"/>
    <property type="match status" value="1"/>
</dbReference>
<dbReference type="FunFam" id="3.40.50.720:FF:000049">
    <property type="entry name" value="Alanine dehydrogenase"/>
    <property type="match status" value="1"/>
</dbReference>
<dbReference type="Gene3D" id="3.40.50.720">
    <property type="entry name" value="NAD(P)-binding Rossmann-like Domain"/>
    <property type="match status" value="2"/>
</dbReference>
<dbReference type="InterPro" id="IPR008141">
    <property type="entry name" value="Ala_DH"/>
</dbReference>
<dbReference type="InterPro" id="IPR008143">
    <property type="entry name" value="Ala_DH/PNT_CS2"/>
</dbReference>
<dbReference type="InterPro" id="IPR008142">
    <property type="entry name" value="AlaDH/PNT_CS1"/>
</dbReference>
<dbReference type="InterPro" id="IPR007886">
    <property type="entry name" value="AlaDH/PNT_N"/>
</dbReference>
<dbReference type="InterPro" id="IPR007698">
    <property type="entry name" value="AlaDH/PNT_NAD(H)-bd"/>
</dbReference>
<dbReference type="InterPro" id="IPR036291">
    <property type="entry name" value="NAD(P)-bd_dom_sf"/>
</dbReference>
<dbReference type="NCBIfam" id="TIGR00518">
    <property type="entry name" value="alaDH"/>
    <property type="match status" value="1"/>
</dbReference>
<dbReference type="PANTHER" id="PTHR42795">
    <property type="entry name" value="ALANINE DEHYDROGENASE"/>
    <property type="match status" value="1"/>
</dbReference>
<dbReference type="PANTHER" id="PTHR42795:SF1">
    <property type="entry name" value="ALANINE DEHYDROGENASE"/>
    <property type="match status" value="1"/>
</dbReference>
<dbReference type="Pfam" id="PF01262">
    <property type="entry name" value="AlaDh_PNT_C"/>
    <property type="match status" value="1"/>
</dbReference>
<dbReference type="Pfam" id="PF05222">
    <property type="entry name" value="AlaDh_PNT_N"/>
    <property type="match status" value="1"/>
</dbReference>
<dbReference type="PIRSF" id="PIRSF000183">
    <property type="entry name" value="Alanine_dh"/>
    <property type="match status" value="1"/>
</dbReference>
<dbReference type="SMART" id="SM01002">
    <property type="entry name" value="AlaDh_PNT_C"/>
    <property type="match status" value="1"/>
</dbReference>
<dbReference type="SMART" id="SM01003">
    <property type="entry name" value="AlaDh_PNT_N"/>
    <property type="match status" value="1"/>
</dbReference>
<dbReference type="SUPFAM" id="SSF52283">
    <property type="entry name" value="Formate/glycerate dehydrogenase catalytic domain-like"/>
    <property type="match status" value="1"/>
</dbReference>
<dbReference type="SUPFAM" id="SSF51735">
    <property type="entry name" value="NAD(P)-binding Rossmann-fold domains"/>
    <property type="match status" value="1"/>
</dbReference>
<dbReference type="PROSITE" id="PS00836">
    <property type="entry name" value="ALADH_PNT_1"/>
    <property type="match status" value="1"/>
</dbReference>
<dbReference type="PROSITE" id="PS00837">
    <property type="entry name" value="ALADH_PNT_2"/>
    <property type="match status" value="1"/>
</dbReference>